<feature type="chain" id="PRO_0000394767" description="Probable dolichol-phosphate mannosyltransferase subunit 3">
    <location>
        <begin position="1"/>
        <end position="85"/>
    </location>
</feature>
<feature type="transmembrane region" description="Helical" evidence="3">
    <location>
        <begin position="13"/>
        <end position="33"/>
    </location>
</feature>
<feature type="transmembrane region" description="Helical" evidence="3">
    <location>
        <begin position="37"/>
        <end position="57"/>
    </location>
</feature>
<accession>A8WUS5</accession>
<gene>
    <name evidence="4" type="primary">dpm-3</name>
    <name type="ORF">CBG03325</name>
</gene>
<name>DPM3_CAEBR</name>
<proteinExistence type="inferred from homology"/>
<protein>
    <recommendedName>
        <fullName evidence="2">Probable dolichol-phosphate mannosyltransferase subunit 3</fullName>
    </recommendedName>
    <alternativeName>
        <fullName>DPM synthase subunit 3</fullName>
    </alternativeName>
    <alternativeName>
        <fullName evidence="2">Dolichol-phosphate mannose synthase subunit 3</fullName>
    </alternativeName>
    <alternativeName>
        <fullName evidence="2">Dolichyl-phosphate beta-D-mannosyltransferase subunit 3</fullName>
    </alternativeName>
    <alternativeName>
        <fullName evidence="2">Mannose-P-dolichol synthase subunit 3</fullName>
        <shortName evidence="2">MPD synthase subunit 3</shortName>
    </alternativeName>
</protein>
<sequence length="85" mass="9663">MASQLIIYSAHVVLLVLVWLLAYTEVVPVLSYIPECAHCLVYYIYAAFNVIYGVATFNDCAEAKVELLQEIKQARAELKQKRIID</sequence>
<dbReference type="EMBL" id="HE601244">
    <property type="protein sequence ID" value="CAP24237.2"/>
    <property type="molecule type" value="Genomic_DNA"/>
</dbReference>
<dbReference type="SMR" id="A8WUS5"/>
<dbReference type="FunCoup" id="A8WUS5">
    <property type="interactions" value="242"/>
</dbReference>
<dbReference type="STRING" id="6238.A8WUS5"/>
<dbReference type="WormBase" id="CBG03325">
    <property type="protein sequence ID" value="CBP14688"/>
    <property type="gene ID" value="WBGene00026206"/>
    <property type="gene designation" value="Cbr-dpm-3"/>
</dbReference>
<dbReference type="eggNOG" id="KOG4841">
    <property type="taxonomic scope" value="Eukaryota"/>
</dbReference>
<dbReference type="HOGENOM" id="CLU_150782_0_0_1"/>
<dbReference type="InParanoid" id="A8WUS5"/>
<dbReference type="OMA" id="FNDCAEA"/>
<dbReference type="UniPathway" id="UPA00378"/>
<dbReference type="Proteomes" id="UP000008549">
    <property type="component" value="Unassembled WGS sequence"/>
</dbReference>
<dbReference type="GO" id="GO:0033185">
    <property type="term" value="C:dolichol-phosphate-mannose synthase complex"/>
    <property type="evidence" value="ECO:0000318"/>
    <property type="project" value="GO_Central"/>
</dbReference>
<dbReference type="GO" id="GO:0005789">
    <property type="term" value="C:endoplasmic reticulum membrane"/>
    <property type="evidence" value="ECO:0000318"/>
    <property type="project" value="GO_Central"/>
</dbReference>
<dbReference type="GO" id="GO:0006506">
    <property type="term" value="P:GPI anchor biosynthetic process"/>
    <property type="evidence" value="ECO:0000318"/>
    <property type="project" value="GO_Central"/>
</dbReference>
<dbReference type="GO" id="GO:0006486">
    <property type="term" value="P:protein glycosylation"/>
    <property type="evidence" value="ECO:0007669"/>
    <property type="project" value="UniProtKB-UniPathway"/>
</dbReference>
<dbReference type="InterPro" id="IPR013174">
    <property type="entry name" value="DPM3"/>
</dbReference>
<dbReference type="Pfam" id="PF08285">
    <property type="entry name" value="DPM3"/>
    <property type="match status" value="1"/>
</dbReference>
<organism>
    <name type="scientific">Caenorhabditis briggsae</name>
    <dbReference type="NCBI Taxonomy" id="6238"/>
    <lineage>
        <taxon>Eukaryota</taxon>
        <taxon>Metazoa</taxon>
        <taxon>Ecdysozoa</taxon>
        <taxon>Nematoda</taxon>
        <taxon>Chromadorea</taxon>
        <taxon>Rhabditida</taxon>
        <taxon>Rhabditina</taxon>
        <taxon>Rhabditomorpha</taxon>
        <taxon>Rhabditoidea</taxon>
        <taxon>Rhabditidae</taxon>
        <taxon>Peloderinae</taxon>
        <taxon>Caenorhabditis</taxon>
    </lineage>
</organism>
<reference evidence="4" key="1">
    <citation type="journal article" date="2003" name="PLoS Biol.">
        <title>The genome sequence of Caenorhabditis briggsae: a platform for comparative genomics.</title>
        <authorList>
            <person name="Stein L.D."/>
            <person name="Bao Z."/>
            <person name="Blasiar D."/>
            <person name="Blumenthal T."/>
            <person name="Brent M.R."/>
            <person name="Chen N."/>
            <person name="Chinwalla A."/>
            <person name="Clarke L."/>
            <person name="Clee C."/>
            <person name="Coghlan A."/>
            <person name="Coulson A."/>
            <person name="D'Eustachio P."/>
            <person name="Fitch D.H.A."/>
            <person name="Fulton L.A."/>
            <person name="Fulton R.E."/>
            <person name="Griffiths-Jones S."/>
            <person name="Harris T.W."/>
            <person name="Hillier L.W."/>
            <person name="Kamath R."/>
            <person name="Kuwabara P.E."/>
            <person name="Mardis E.R."/>
            <person name="Marra M.A."/>
            <person name="Miner T.L."/>
            <person name="Minx P."/>
            <person name="Mullikin J.C."/>
            <person name="Plumb R.W."/>
            <person name="Rogers J."/>
            <person name="Schein J.E."/>
            <person name="Sohrmann M."/>
            <person name="Spieth J."/>
            <person name="Stajich J.E."/>
            <person name="Wei C."/>
            <person name="Willey D."/>
            <person name="Wilson R.K."/>
            <person name="Durbin R.M."/>
            <person name="Waterston R.H."/>
        </authorList>
    </citation>
    <scope>NUCLEOTIDE SEQUENCE [LARGE SCALE GENOMIC DNA]</scope>
    <source>
        <strain>AF16</strain>
    </source>
</reference>
<evidence type="ECO:0000250" key="1">
    <source>
        <dbReference type="UniProtKB" id="Q9P2X0"/>
    </source>
</evidence>
<evidence type="ECO:0000250" key="2">
    <source>
        <dbReference type="UniProtKB" id="Q9XVV5"/>
    </source>
</evidence>
<evidence type="ECO:0000255" key="3"/>
<evidence type="ECO:0000312" key="4">
    <source>
        <dbReference type="EMBL" id="CAP24237.2"/>
    </source>
</evidence>
<comment type="function">
    <text evidence="1">Stabilizer subunit of the dolichol-phosphate-mannose synthase complex.</text>
</comment>
<comment type="pathway">
    <text>Protein modification; protein glycosylation.</text>
</comment>
<comment type="subcellular location">
    <subcellularLocation>
        <location evidence="1">Endoplasmic reticulum membrane</location>
        <topology evidence="1">Multi-pass membrane protein</topology>
    </subcellularLocation>
</comment>
<comment type="similarity">
    <text evidence="3">Belongs to the DPM3 family.</text>
</comment>
<keyword id="KW-0256">Endoplasmic reticulum</keyword>
<keyword id="KW-0472">Membrane</keyword>
<keyword id="KW-1185">Reference proteome</keyword>
<keyword id="KW-0812">Transmembrane</keyword>
<keyword id="KW-1133">Transmembrane helix</keyword>